<evidence type="ECO:0000250" key="1">
    <source>
        <dbReference type="UniProtKB" id="P52435"/>
    </source>
</evidence>
<evidence type="ECO:0000305" key="2"/>
<gene>
    <name type="primary">Polr2j</name>
    <name type="synonym">Rpo2-4</name>
</gene>
<proteinExistence type="evidence at protein level"/>
<keyword id="KW-0007">Acetylation</keyword>
<keyword id="KW-0240">DNA-directed RNA polymerase</keyword>
<keyword id="KW-0539">Nucleus</keyword>
<keyword id="KW-1185">Reference proteome</keyword>
<keyword id="KW-0804">Transcription</keyword>
<reference key="1">
    <citation type="journal article" date="1997" name="Gene">
        <title>Isolation and characterization of cDNA encoding mouse RNA polymerase II subunit RPB14.</title>
        <authorList>
            <person name="Nishi Y."/>
            <person name="Yamamoto K."/>
            <person name="Yao Y."/>
            <person name="Yamamoto M."/>
            <person name="Nogi Y."/>
            <person name="Matsuo H."/>
            <person name="Muramatsu M."/>
        </authorList>
    </citation>
    <scope>NUCLEOTIDE SEQUENCE [MRNA]</scope>
</reference>
<reference key="2">
    <citation type="journal article" date="2010" name="Cell">
        <title>A tissue-specific atlas of mouse protein phosphorylation and expression.</title>
        <authorList>
            <person name="Huttlin E.L."/>
            <person name="Jedrychowski M.P."/>
            <person name="Elias J.E."/>
            <person name="Goswami T."/>
            <person name="Rad R."/>
            <person name="Beausoleil S.A."/>
            <person name="Villen J."/>
            <person name="Haas W."/>
            <person name="Sowa M.E."/>
            <person name="Gygi S.P."/>
        </authorList>
    </citation>
    <scope>IDENTIFICATION BY MASS SPECTROMETRY [LARGE SCALE ANALYSIS]</scope>
    <source>
        <tissue>Testis</tissue>
    </source>
</reference>
<sequence>MNAPPAFESFLLFEGEKKITINKDTKVPNACLFTINKEDHTLGNIIKSQLLKDPQVLFAGYKVPHPLEHKIIIRVQTTPDYSPQEAFTNAITDLISELSLLEERFRGAIKDKQEGIE</sequence>
<feature type="chain" id="PRO_0000149310" description="DNA-directed RNA polymerase II subunit RPB11">
    <location>
        <begin position="1"/>
        <end position="117"/>
    </location>
</feature>
<feature type="modified residue" description="N-acetylmethionine" evidence="1">
    <location>
        <position position="1"/>
    </location>
</feature>
<dbReference type="EMBL" id="D85818">
    <property type="protein sequence ID" value="BAA19918.1"/>
    <property type="molecule type" value="mRNA"/>
</dbReference>
<dbReference type="SMR" id="O08740"/>
<dbReference type="FunCoup" id="O08740">
    <property type="interactions" value="1848"/>
</dbReference>
<dbReference type="IntAct" id="O08740">
    <property type="interactions" value="1"/>
</dbReference>
<dbReference type="MINT" id="O08740"/>
<dbReference type="STRING" id="10090.ENSMUSP00000038505"/>
<dbReference type="PhosphoSitePlus" id="O08740"/>
<dbReference type="PaxDb" id="10090-ENSMUSP00000038505"/>
<dbReference type="ProteomicsDB" id="260835"/>
<dbReference type="Pumba" id="O08740"/>
<dbReference type="AGR" id="MGI:109582"/>
<dbReference type="MGI" id="MGI:109582">
    <property type="gene designation" value="Polr2j"/>
</dbReference>
<dbReference type="eggNOG" id="KOG4392">
    <property type="taxonomic scope" value="Eukaryota"/>
</dbReference>
<dbReference type="InParanoid" id="O08740"/>
<dbReference type="PhylomeDB" id="O08740"/>
<dbReference type="Reactome" id="R-MMU-112382">
    <property type="pathway name" value="Formation of RNA Pol II elongation complex"/>
</dbReference>
<dbReference type="Reactome" id="R-MMU-113418">
    <property type="pathway name" value="Formation of the Early Elongation Complex"/>
</dbReference>
<dbReference type="Reactome" id="R-MMU-674695">
    <property type="pathway name" value="RNA Polymerase II Pre-transcription Events"/>
</dbReference>
<dbReference type="Reactome" id="R-MMU-6781823">
    <property type="pathway name" value="Formation of TC-NER Pre-Incision Complex"/>
</dbReference>
<dbReference type="Reactome" id="R-MMU-6782135">
    <property type="pathway name" value="Dual incision in TC-NER"/>
</dbReference>
<dbReference type="Reactome" id="R-MMU-6782210">
    <property type="pathway name" value="Gap-filling DNA repair synthesis and ligation in TC-NER"/>
</dbReference>
<dbReference type="Reactome" id="R-MMU-6796648">
    <property type="pathway name" value="TP53 Regulates Transcription of DNA Repair Genes"/>
</dbReference>
<dbReference type="Reactome" id="R-MMU-6803529">
    <property type="pathway name" value="FGFR2 alternative splicing"/>
</dbReference>
<dbReference type="Reactome" id="R-MMU-6807505">
    <property type="pathway name" value="RNA polymerase II transcribes snRNA genes"/>
</dbReference>
<dbReference type="Reactome" id="R-MMU-72086">
    <property type="pathway name" value="mRNA Capping"/>
</dbReference>
<dbReference type="Reactome" id="R-MMU-72163">
    <property type="pathway name" value="mRNA Splicing - Major Pathway"/>
</dbReference>
<dbReference type="Reactome" id="R-MMU-72165">
    <property type="pathway name" value="mRNA Splicing - Minor Pathway"/>
</dbReference>
<dbReference type="Reactome" id="R-MMU-72203">
    <property type="pathway name" value="Processing of Capped Intron-Containing Pre-mRNA"/>
</dbReference>
<dbReference type="Reactome" id="R-MMU-73776">
    <property type="pathway name" value="RNA Polymerase II Promoter Escape"/>
</dbReference>
<dbReference type="Reactome" id="R-MMU-73779">
    <property type="pathway name" value="RNA Polymerase II Transcription Pre-Initiation And Promoter Opening"/>
</dbReference>
<dbReference type="Reactome" id="R-MMU-75953">
    <property type="pathway name" value="RNA Polymerase II Transcription Initiation"/>
</dbReference>
<dbReference type="Reactome" id="R-MMU-75955">
    <property type="pathway name" value="RNA Polymerase II Transcription Elongation"/>
</dbReference>
<dbReference type="Reactome" id="R-MMU-76042">
    <property type="pathway name" value="RNA Polymerase II Transcription Initiation And Promoter Clearance"/>
</dbReference>
<dbReference type="Reactome" id="R-MMU-77075">
    <property type="pathway name" value="RNA Pol II CTD phosphorylation and interaction with CE"/>
</dbReference>
<dbReference type="Reactome" id="R-MMU-9018519">
    <property type="pathway name" value="Estrogen-dependent gene expression"/>
</dbReference>
<dbReference type="ChiTaRS" id="Polr2j">
    <property type="organism name" value="mouse"/>
</dbReference>
<dbReference type="PRO" id="PR:O08740"/>
<dbReference type="Proteomes" id="UP000000589">
    <property type="component" value="Unplaced"/>
</dbReference>
<dbReference type="RNAct" id="O08740">
    <property type="molecule type" value="protein"/>
</dbReference>
<dbReference type="GO" id="GO:0005654">
    <property type="term" value="C:nucleoplasm"/>
    <property type="evidence" value="ECO:0000304"/>
    <property type="project" value="Reactome"/>
</dbReference>
<dbReference type="GO" id="GO:0005634">
    <property type="term" value="C:nucleus"/>
    <property type="evidence" value="ECO:0000314"/>
    <property type="project" value="MGI"/>
</dbReference>
<dbReference type="GO" id="GO:0005665">
    <property type="term" value="C:RNA polymerase II, core complex"/>
    <property type="evidence" value="ECO:0000314"/>
    <property type="project" value="MGI"/>
</dbReference>
<dbReference type="GO" id="GO:0003677">
    <property type="term" value="F:DNA binding"/>
    <property type="evidence" value="ECO:0007669"/>
    <property type="project" value="InterPro"/>
</dbReference>
<dbReference type="GO" id="GO:0003899">
    <property type="term" value="F:DNA-directed RNA polymerase activity"/>
    <property type="evidence" value="ECO:0007669"/>
    <property type="project" value="InterPro"/>
</dbReference>
<dbReference type="GO" id="GO:0046983">
    <property type="term" value="F:protein dimerization activity"/>
    <property type="evidence" value="ECO:0007669"/>
    <property type="project" value="InterPro"/>
</dbReference>
<dbReference type="GO" id="GO:0006366">
    <property type="term" value="P:transcription by RNA polymerase II"/>
    <property type="evidence" value="ECO:0007669"/>
    <property type="project" value="InterPro"/>
</dbReference>
<dbReference type="CDD" id="cd06926">
    <property type="entry name" value="RNAP_II_RPB11"/>
    <property type="match status" value="1"/>
</dbReference>
<dbReference type="FunFam" id="3.30.1360.10:FF:000003">
    <property type="entry name" value="DNA-directed RNA polymerase II subunit RPB11"/>
    <property type="match status" value="1"/>
</dbReference>
<dbReference type="Gene3D" id="3.30.1360.10">
    <property type="entry name" value="RNA polymerase, RBP11-like subunit"/>
    <property type="match status" value="1"/>
</dbReference>
<dbReference type="HAMAP" id="MF_00261">
    <property type="entry name" value="RNApol_arch_Rpo11"/>
    <property type="match status" value="1"/>
</dbReference>
<dbReference type="InterPro" id="IPR037685">
    <property type="entry name" value="RBP11"/>
</dbReference>
<dbReference type="InterPro" id="IPR036603">
    <property type="entry name" value="RBP11-like"/>
</dbReference>
<dbReference type="InterPro" id="IPR009025">
    <property type="entry name" value="RBP11-like_dimer"/>
</dbReference>
<dbReference type="InterPro" id="IPR008193">
    <property type="entry name" value="RNA_pol_Rpb11_13-16kDa_CS"/>
</dbReference>
<dbReference type="InterPro" id="IPR022905">
    <property type="entry name" value="Rpo11-like"/>
</dbReference>
<dbReference type="PANTHER" id="PTHR13946">
    <property type="entry name" value="DNA-DIRECTED RNA POLYMERASE I,II,III"/>
    <property type="match status" value="1"/>
</dbReference>
<dbReference type="PANTHER" id="PTHR13946:SF16">
    <property type="entry name" value="DNA-DIRECTED RNA POLYMERASE II SUBUNIT RPB11"/>
    <property type="match status" value="1"/>
</dbReference>
<dbReference type="Pfam" id="PF13656">
    <property type="entry name" value="RNA_pol_L_2"/>
    <property type="match status" value="1"/>
</dbReference>
<dbReference type="SUPFAM" id="SSF55257">
    <property type="entry name" value="RBP11-like subunits of RNA polymerase"/>
    <property type="match status" value="1"/>
</dbReference>
<dbReference type="PROSITE" id="PS01154">
    <property type="entry name" value="RNA_POL_L_13KD"/>
    <property type="match status" value="1"/>
</dbReference>
<protein>
    <recommendedName>
        <fullName>DNA-directed RNA polymerase II subunit RPB11</fullName>
        <shortName>RNA polymerase II subunit B11</shortName>
    </recommendedName>
    <alternativeName>
        <fullName>DNA-directed RNA polymerase II subunit J</fullName>
    </alternativeName>
    <alternativeName>
        <fullName>RNA polymerase II 13.3 kDa subunit</fullName>
    </alternativeName>
    <alternativeName>
        <fullName>RPB14</fullName>
    </alternativeName>
</protein>
<accession>O08740</accession>
<comment type="function">
    <text evidence="1">Core component of RNA polymerase II (Pol II), a DNA-dependent RNA polymerase which synthesizes mRNA precursors and many functional non-coding RNAs using the four ribonucleoside triphosphates as substrates.</text>
</comment>
<comment type="subunit">
    <text evidence="1">Component of the RNA polymerase II (Pol II) core complex consisting of 12 subunits: a ten-subunit catalytic core composed of POLR2A/RPB1, POLR2B/RPB2, POLR2C/RPB3, POLR2I/RPB9, POLR2J/RPB11, POLR2E/RPABC1, POLR2F/RPABC2, POLR2H/RPABC3, POLR2K/RPABC4 and POLR2L/RPABC5 and a mobile stalk composed of two subunits POLR2D/RPB4 and POLR2G/RPB7, protruding from the core and functioning primarily in transcription initiation. Part of Pol II(G) complex, in which Pol II core associates with an additional subunit POLR2M; unlike conventional Pol II, Pol II(G) functions as a transcriptional repressor. Part of TBP-based Pol II pre-initiation complex (PIC), in which Pol II core assembles with general transcription factors and other specific initiation factors including GTF2E1, GTF2E2, GTF2F1, GTF2F2, TCEA1, ERCC2, ERCC3, GTF2H2, GTF2H3, GTF2H4, GTF2H5, GTF2A1, GTF2A2, GTF2B and TBP; this large multi-subunit PIC complex mediates DNA unwinding and targets Pol II core to the transcription start site where the first phosphodiester bond forms. Interacts with AATF. Interacts with PTPN6; this interaction promotes the recruitment of RNA pol II to the PCK1 promoter.</text>
</comment>
<comment type="subcellular location">
    <subcellularLocation>
        <location evidence="1">Nucleus</location>
    </subcellularLocation>
</comment>
<comment type="similarity">
    <text evidence="2">Belongs to the archaeal Rpo11/eukaryotic RPB11/RPC19 RNA polymerase subunit family.</text>
</comment>
<name>RPB11_MOUSE</name>
<organism>
    <name type="scientific">Mus musculus</name>
    <name type="common">Mouse</name>
    <dbReference type="NCBI Taxonomy" id="10090"/>
    <lineage>
        <taxon>Eukaryota</taxon>
        <taxon>Metazoa</taxon>
        <taxon>Chordata</taxon>
        <taxon>Craniata</taxon>
        <taxon>Vertebrata</taxon>
        <taxon>Euteleostomi</taxon>
        <taxon>Mammalia</taxon>
        <taxon>Eutheria</taxon>
        <taxon>Euarchontoglires</taxon>
        <taxon>Glires</taxon>
        <taxon>Rodentia</taxon>
        <taxon>Myomorpha</taxon>
        <taxon>Muroidea</taxon>
        <taxon>Muridae</taxon>
        <taxon>Murinae</taxon>
        <taxon>Mus</taxon>
        <taxon>Mus</taxon>
    </lineage>
</organism>